<name>SOMA_MISMI</name>
<keyword id="KW-1015">Disulfide bond</keyword>
<keyword id="KW-0372">Hormone</keyword>
<keyword id="KW-0479">Metal-binding</keyword>
<keyword id="KW-0964">Secreted</keyword>
<keyword id="KW-0732">Signal</keyword>
<keyword id="KW-0862">Zinc</keyword>
<dbReference type="EMBL" id="AF133815">
    <property type="protein sequence ID" value="AAD31845.1"/>
    <property type="molecule type" value="Genomic_DNA"/>
</dbReference>
<dbReference type="SMR" id="Q9W6J5"/>
<dbReference type="GO" id="GO:0005615">
    <property type="term" value="C:extracellular space"/>
    <property type="evidence" value="ECO:0007669"/>
    <property type="project" value="InterPro"/>
</dbReference>
<dbReference type="GO" id="GO:0070186">
    <property type="term" value="F:growth hormone activity"/>
    <property type="evidence" value="ECO:0007669"/>
    <property type="project" value="TreeGrafter"/>
</dbReference>
<dbReference type="GO" id="GO:0005131">
    <property type="term" value="F:growth hormone receptor binding"/>
    <property type="evidence" value="ECO:0007669"/>
    <property type="project" value="InterPro"/>
</dbReference>
<dbReference type="GO" id="GO:0046872">
    <property type="term" value="F:metal ion binding"/>
    <property type="evidence" value="ECO:0007669"/>
    <property type="project" value="UniProtKB-KW"/>
</dbReference>
<dbReference type="GO" id="GO:0048513">
    <property type="term" value="P:animal organ development"/>
    <property type="evidence" value="ECO:0007669"/>
    <property type="project" value="TreeGrafter"/>
</dbReference>
<dbReference type="GO" id="GO:0060396">
    <property type="term" value="P:growth hormone receptor signaling pathway"/>
    <property type="evidence" value="ECO:0007669"/>
    <property type="project" value="TreeGrafter"/>
</dbReference>
<dbReference type="GO" id="GO:0045927">
    <property type="term" value="P:positive regulation of growth"/>
    <property type="evidence" value="ECO:0007669"/>
    <property type="project" value="TreeGrafter"/>
</dbReference>
<dbReference type="GO" id="GO:0046427">
    <property type="term" value="P:positive regulation of receptor signaling pathway via JAK-STAT"/>
    <property type="evidence" value="ECO:0007669"/>
    <property type="project" value="TreeGrafter"/>
</dbReference>
<dbReference type="GO" id="GO:0031667">
    <property type="term" value="P:response to nutrient levels"/>
    <property type="evidence" value="ECO:0007669"/>
    <property type="project" value="TreeGrafter"/>
</dbReference>
<dbReference type="CDD" id="cd10285">
    <property type="entry name" value="somatotropin_like"/>
    <property type="match status" value="1"/>
</dbReference>
<dbReference type="FunFam" id="1.20.1250.10:FF:000009">
    <property type="entry name" value="Growth hormone"/>
    <property type="match status" value="1"/>
</dbReference>
<dbReference type="Gene3D" id="1.20.1250.10">
    <property type="match status" value="1"/>
</dbReference>
<dbReference type="InterPro" id="IPR009079">
    <property type="entry name" value="4_helix_cytokine-like_core"/>
</dbReference>
<dbReference type="InterPro" id="IPR034975">
    <property type="entry name" value="Somatotropin"/>
</dbReference>
<dbReference type="InterPro" id="IPR001400">
    <property type="entry name" value="Somatotropin/Prolactin"/>
</dbReference>
<dbReference type="InterPro" id="IPR018116">
    <property type="entry name" value="Somatotropin_CS"/>
</dbReference>
<dbReference type="PANTHER" id="PTHR11417:SF2">
    <property type="entry name" value="SOMATOTROPIN"/>
    <property type="match status" value="1"/>
</dbReference>
<dbReference type="PANTHER" id="PTHR11417">
    <property type="entry name" value="SOMATOTROPIN,PROLACTIN"/>
    <property type="match status" value="1"/>
</dbReference>
<dbReference type="Pfam" id="PF00103">
    <property type="entry name" value="Hormone_1"/>
    <property type="match status" value="1"/>
</dbReference>
<dbReference type="PRINTS" id="PR00836">
    <property type="entry name" value="SOMATOTROPIN"/>
</dbReference>
<dbReference type="SUPFAM" id="SSF47266">
    <property type="entry name" value="4-helical cytokines"/>
    <property type="match status" value="1"/>
</dbReference>
<dbReference type="PROSITE" id="PS00266">
    <property type="entry name" value="SOMATOTROPIN_1"/>
    <property type="match status" value="1"/>
</dbReference>
<dbReference type="PROSITE" id="PS00338">
    <property type="entry name" value="SOMATOTROPIN_2"/>
    <property type="match status" value="1"/>
</dbReference>
<reference key="1">
    <citation type="journal article" date="1999" name="Mol. Cells">
        <title>Genomic organization and sequence of the mud loach (Misgurnus mizolepis) growth hormone gene: a comparative analysis of teleost growth hormone genes.</title>
        <authorList>
            <person name="Noh J.K."/>
            <person name="Cho K.N."/>
            <person name="Nam Y.K."/>
            <person name="Kim D.S."/>
            <person name="Kim C.G."/>
        </authorList>
    </citation>
    <scope>NUCLEOTIDE SEQUENCE [GENOMIC DNA]</scope>
</reference>
<accession>Q9W6J5</accession>
<evidence type="ECO:0000250" key="1"/>
<evidence type="ECO:0000305" key="2"/>
<feature type="signal peptide" evidence="1">
    <location>
        <begin position="1"/>
        <end position="22"/>
    </location>
</feature>
<feature type="chain" id="PRO_0000033031" description="Somatotropin">
    <location>
        <begin position="23"/>
        <end position="210"/>
    </location>
</feature>
<feature type="binding site" evidence="1">
    <location>
        <position position="38"/>
    </location>
    <ligand>
        <name>Zn(2+)</name>
        <dbReference type="ChEBI" id="CHEBI:29105"/>
    </ligand>
</feature>
<feature type="binding site" evidence="1">
    <location>
        <position position="192"/>
    </location>
    <ligand>
        <name>Zn(2+)</name>
        <dbReference type="ChEBI" id="CHEBI:29105"/>
    </ligand>
</feature>
<feature type="disulfide bond" evidence="1">
    <location>
        <begin position="71"/>
        <end position="183"/>
    </location>
</feature>
<feature type="disulfide bond" evidence="1">
    <location>
        <begin position="200"/>
        <end position="208"/>
    </location>
</feature>
<protein>
    <recommendedName>
        <fullName>Somatotropin</fullName>
    </recommendedName>
    <alternativeName>
        <fullName>Growth hormone</fullName>
    </alternativeName>
</protein>
<proteinExistence type="inferred from homology"/>
<sequence>MAKALVLLSLVLVSVFVNNGTASENQRLFNNAVIRVQHLHQLAAKMINDFEDSLLPEERRQLSKIFPLSFCNSDSIEAPTGKDETQKSSVLKLLRISFRLIESWEYPSQTLSGTISNSLTIGNPSQITEKLADLKVGISVLIKGCLDGQPNMDDNDSLPLPFEDFYLTLGENNLRESFRLLACFKKDMHKVETYLRVANCRRSLDSNCTL</sequence>
<gene>
    <name type="primary">gh</name>
</gene>
<organism>
    <name type="scientific">Misgurnus mizolepis</name>
    <name type="common">Chinese weatherloach</name>
    <dbReference type="NCBI Taxonomy" id="93600"/>
    <lineage>
        <taxon>Eukaryota</taxon>
        <taxon>Metazoa</taxon>
        <taxon>Chordata</taxon>
        <taxon>Craniata</taxon>
        <taxon>Vertebrata</taxon>
        <taxon>Euteleostomi</taxon>
        <taxon>Actinopterygii</taxon>
        <taxon>Neopterygii</taxon>
        <taxon>Teleostei</taxon>
        <taxon>Ostariophysi</taxon>
        <taxon>Cypriniformes</taxon>
        <taxon>Cobitidae</taxon>
        <taxon>Cobitinae</taxon>
        <taxon>Misgurnus</taxon>
    </lineage>
</organism>
<comment type="function">
    <text>Growth hormone plays an important role in growth control and is involved in the regulation of several anabolic processes. Implicated as an osmoregulatory substance important for seawater adaptation.</text>
</comment>
<comment type="subcellular location">
    <subcellularLocation>
        <location>Secreted</location>
    </subcellularLocation>
</comment>
<comment type="similarity">
    <text evidence="2">Belongs to the somatotropin/prolactin family.</text>
</comment>